<proteinExistence type="inferred from homology"/>
<dbReference type="EC" id="4.2.1.109"/>
<dbReference type="EC" id="3.1.3.87"/>
<dbReference type="EMBL" id="CP000002">
    <property type="protein sequence ID" value="AAU23063.1"/>
    <property type="molecule type" value="Genomic_DNA"/>
</dbReference>
<dbReference type="EMBL" id="AE017333">
    <property type="protein sequence ID" value="AAU40417.1"/>
    <property type="molecule type" value="Genomic_DNA"/>
</dbReference>
<dbReference type="SMR" id="Q65KJ7"/>
<dbReference type="STRING" id="279010.BL03541"/>
<dbReference type="KEGG" id="bld:BLi01516"/>
<dbReference type="KEGG" id="bli:BL03541"/>
<dbReference type="eggNOG" id="COG0235">
    <property type="taxonomic scope" value="Bacteria"/>
</dbReference>
<dbReference type="eggNOG" id="COG4359">
    <property type="taxonomic scope" value="Bacteria"/>
</dbReference>
<dbReference type="HOGENOM" id="CLU_641990_0_0_9"/>
<dbReference type="UniPathway" id="UPA00904">
    <property type="reaction ID" value="UER00875"/>
</dbReference>
<dbReference type="UniPathway" id="UPA00904">
    <property type="reaction ID" value="UER00877"/>
</dbReference>
<dbReference type="Proteomes" id="UP000000606">
    <property type="component" value="Chromosome"/>
</dbReference>
<dbReference type="GO" id="GO:0005737">
    <property type="term" value="C:cytoplasm"/>
    <property type="evidence" value="ECO:0007669"/>
    <property type="project" value="InterPro"/>
</dbReference>
<dbReference type="GO" id="GO:0043716">
    <property type="term" value="F:2-hydroxy-3-keto-5-methylthiopentenyl-1-phosphate phosphatase activity"/>
    <property type="evidence" value="ECO:0007669"/>
    <property type="project" value="UniProtKB-UniRule"/>
</dbReference>
<dbReference type="GO" id="GO:0046570">
    <property type="term" value="F:methylthioribulose 1-phosphate dehydratase activity"/>
    <property type="evidence" value="ECO:0007669"/>
    <property type="project" value="UniProtKB-UniRule"/>
</dbReference>
<dbReference type="GO" id="GO:0008270">
    <property type="term" value="F:zinc ion binding"/>
    <property type="evidence" value="ECO:0007669"/>
    <property type="project" value="UniProtKB-UniRule"/>
</dbReference>
<dbReference type="GO" id="GO:0019509">
    <property type="term" value="P:L-methionine salvage from methylthioadenosine"/>
    <property type="evidence" value="ECO:0007669"/>
    <property type="project" value="UniProtKB-UniRule"/>
</dbReference>
<dbReference type="CDD" id="cd07524">
    <property type="entry name" value="HAD_Pase"/>
    <property type="match status" value="1"/>
</dbReference>
<dbReference type="Gene3D" id="3.90.1470.20">
    <property type="match status" value="1"/>
</dbReference>
<dbReference type="Gene3D" id="3.40.225.10">
    <property type="entry name" value="Class II aldolase/adducin N-terminal domain"/>
    <property type="match status" value="1"/>
</dbReference>
<dbReference type="Gene3D" id="3.40.50.1000">
    <property type="entry name" value="HAD superfamily/HAD-like"/>
    <property type="match status" value="1"/>
</dbReference>
<dbReference type="HAMAP" id="MF_01677">
    <property type="entry name" value="Salvage_MtnB"/>
    <property type="match status" value="1"/>
</dbReference>
<dbReference type="HAMAP" id="MF_01680">
    <property type="entry name" value="Salvage_MtnX"/>
    <property type="match status" value="1"/>
</dbReference>
<dbReference type="InterPro" id="IPR001303">
    <property type="entry name" value="Aldolase_II/adducin_N"/>
</dbReference>
<dbReference type="InterPro" id="IPR036409">
    <property type="entry name" value="Aldolase_II/adducin_N_sf"/>
</dbReference>
<dbReference type="InterPro" id="IPR036412">
    <property type="entry name" value="HAD-like_sf"/>
</dbReference>
<dbReference type="InterPro" id="IPR017718">
    <property type="entry name" value="HAD-SF_hydro_IB_MtnX"/>
</dbReference>
<dbReference type="InterPro" id="IPR006384">
    <property type="entry name" value="HAD_hydro_PyrdxlP_Pase-like"/>
</dbReference>
<dbReference type="InterPro" id="IPR023214">
    <property type="entry name" value="HAD_sf"/>
</dbReference>
<dbReference type="InterPro" id="IPR017714">
    <property type="entry name" value="MethylthioRu-1-P_deHdtase_MtnB"/>
</dbReference>
<dbReference type="NCBIfam" id="TIGR01489">
    <property type="entry name" value="DKMTPPase-SF"/>
    <property type="match status" value="1"/>
</dbReference>
<dbReference type="NCBIfam" id="TIGR01488">
    <property type="entry name" value="HAD-SF-IB"/>
    <property type="match status" value="1"/>
</dbReference>
<dbReference type="NCBIfam" id="NF005244">
    <property type="entry name" value="PRK06754.1"/>
    <property type="match status" value="1"/>
</dbReference>
<dbReference type="NCBIfam" id="NF007103">
    <property type="entry name" value="PRK09552.1"/>
    <property type="match status" value="1"/>
</dbReference>
<dbReference type="NCBIfam" id="TIGR03328">
    <property type="entry name" value="salvage_mtnB"/>
    <property type="match status" value="1"/>
</dbReference>
<dbReference type="NCBIfam" id="TIGR03333">
    <property type="entry name" value="salvage_mtnX"/>
    <property type="match status" value="1"/>
</dbReference>
<dbReference type="PANTHER" id="PTHR10640">
    <property type="entry name" value="METHYLTHIORIBULOSE-1-PHOSPHATE DEHYDRATASE"/>
    <property type="match status" value="1"/>
</dbReference>
<dbReference type="PANTHER" id="PTHR10640:SF7">
    <property type="entry name" value="METHYLTHIORIBULOSE-1-PHOSPHATE DEHYDRATASE"/>
    <property type="match status" value="1"/>
</dbReference>
<dbReference type="Pfam" id="PF00596">
    <property type="entry name" value="Aldolase_II"/>
    <property type="match status" value="1"/>
</dbReference>
<dbReference type="Pfam" id="PF12710">
    <property type="entry name" value="HAD"/>
    <property type="match status" value="1"/>
</dbReference>
<dbReference type="SMART" id="SM01007">
    <property type="entry name" value="Aldolase_II"/>
    <property type="match status" value="1"/>
</dbReference>
<dbReference type="SUPFAM" id="SSF53639">
    <property type="entry name" value="AraD/HMP-PK domain-like"/>
    <property type="match status" value="1"/>
</dbReference>
<dbReference type="SUPFAM" id="SSF56784">
    <property type="entry name" value="HAD-like"/>
    <property type="match status" value="1"/>
</dbReference>
<name>MTNBX_BACLD</name>
<protein>
    <recommendedName>
        <fullName>Bifunctional enzyme MtnB/MtnX</fullName>
    </recommendedName>
    <domain>
        <recommendedName>
            <fullName>Methylthioribulose-1-phosphate dehydratase</fullName>
            <shortName>MTRu-1-P dehydratase</shortName>
            <ecNumber>4.2.1.109</ecNumber>
        </recommendedName>
    </domain>
    <domain>
        <recommendedName>
            <fullName>2-hydroxy-3-keto-5-methylthiopentenyl-1-phosphate phosphatase</fullName>
            <shortName>HK-MTPenyl-1-P phosphatase</shortName>
            <ecNumber>3.1.3.87</ecNumber>
        </recommendedName>
    </domain>
</protein>
<keyword id="KW-0028">Amino-acid biosynthesis</keyword>
<keyword id="KW-0378">Hydrolase</keyword>
<keyword id="KW-0456">Lyase</keyword>
<keyword id="KW-0479">Metal-binding</keyword>
<keyword id="KW-0486">Methionine biosynthesis</keyword>
<keyword id="KW-0511">Multifunctional enzyme</keyword>
<keyword id="KW-1185">Reference proteome</keyword>
<keyword id="KW-0862">Zinc</keyword>
<feature type="chain" id="PRO_0000358313" description="Bifunctional enzyme MtnB/MtnX">
    <location>
        <begin position="1"/>
        <end position="427"/>
    </location>
</feature>
<feature type="region of interest" description="HK-MTPenyl-1-P phosphatase">
    <location>
        <begin position="1"/>
        <end position="221"/>
    </location>
</feature>
<feature type="region of interest" description="MTRu-1-P dehydratase">
    <location>
        <begin position="222"/>
        <end position="427"/>
    </location>
</feature>
<feature type="binding site" evidence="1">
    <location>
        <position position="317"/>
    </location>
    <ligand>
        <name>Zn(2+)</name>
        <dbReference type="ChEBI" id="CHEBI:29105"/>
    </ligand>
</feature>
<feature type="binding site" evidence="1">
    <location>
        <position position="319"/>
    </location>
    <ligand>
        <name>Zn(2+)</name>
        <dbReference type="ChEBI" id="CHEBI:29105"/>
    </ligand>
</feature>
<organism>
    <name type="scientific">Bacillus licheniformis (strain ATCC 14580 / DSM 13 / JCM 2505 / CCUG 7422 / NBRC 12200 / NCIMB 9375 / NCTC 10341 / NRRL NRS-1264 / Gibson 46)</name>
    <dbReference type="NCBI Taxonomy" id="279010"/>
    <lineage>
        <taxon>Bacteria</taxon>
        <taxon>Bacillati</taxon>
        <taxon>Bacillota</taxon>
        <taxon>Bacilli</taxon>
        <taxon>Bacillales</taxon>
        <taxon>Bacillaceae</taxon>
        <taxon>Bacillus</taxon>
    </lineage>
</organism>
<evidence type="ECO:0000250" key="1"/>
<evidence type="ECO:0000305" key="2"/>
<gene>
    <name type="primary">mtnB/mtnX</name>
    <name type="ordered locus">BLi01516</name>
    <name type="ordered locus">BL03541</name>
</gene>
<comment type="function">
    <text evidence="1">Catalyzes the dehydration of methylthioribulose-1-phosphate (MTRu-1-P) into 2,3-diketo-5-methylthiopentyl-1-phosphate (DK-MTP-1-P).</text>
</comment>
<comment type="function">
    <text evidence="1">Dephosphorylates 2-hydroxy-3-keto-5-methylthiopentenyl-1-phosphate (HK-MTPenyl-1-P) yielding 1,2-dihydroxy-3-keto-5-methylthiopentene (DHK-MTPene).</text>
</comment>
<comment type="catalytic activity">
    <reaction>
        <text>5-(methylsulfanyl)-D-ribulose 1-phosphate = 5-methylsulfanyl-2,3-dioxopentyl phosphate + H2O</text>
        <dbReference type="Rhea" id="RHEA:15549"/>
        <dbReference type="ChEBI" id="CHEBI:15377"/>
        <dbReference type="ChEBI" id="CHEBI:58548"/>
        <dbReference type="ChEBI" id="CHEBI:58828"/>
        <dbReference type="EC" id="4.2.1.109"/>
    </reaction>
</comment>
<comment type="catalytic activity">
    <reaction>
        <text>2-hydroxy-5-methylsulfanyl-3-oxopent-1-enyl phosphate + H2O = 1,2-dihydroxy-5-(methylsulfanyl)pent-1-en-3-one + phosphate</text>
        <dbReference type="Rhea" id="RHEA:14481"/>
        <dbReference type="ChEBI" id="CHEBI:15377"/>
        <dbReference type="ChEBI" id="CHEBI:43474"/>
        <dbReference type="ChEBI" id="CHEBI:49252"/>
        <dbReference type="ChEBI" id="CHEBI:59505"/>
        <dbReference type="EC" id="3.1.3.87"/>
    </reaction>
</comment>
<comment type="cofactor">
    <cofactor evidence="1">
        <name>Zn(2+)</name>
        <dbReference type="ChEBI" id="CHEBI:29105"/>
    </cofactor>
    <text evidence="1">Binds 1 zinc ion per subunit.</text>
</comment>
<comment type="pathway">
    <text>Amino-acid biosynthesis; L-methionine biosynthesis via salvage pathway; L-methionine from S-methyl-5-thio-alpha-D-ribose 1-phosphate: step 2/6.</text>
</comment>
<comment type="pathway">
    <text>Amino-acid biosynthesis; L-methionine biosynthesis via salvage pathway; L-methionine from S-methyl-5-thio-alpha-D-ribose 1-phosphate: step 4/6.</text>
</comment>
<comment type="subunit">
    <text evidence="1">Homotetramer.</text>
</comment>
<comment type="similarity">
    <text evidence="2">In the N-terminal section; belongs to the HAD-like hydrolase superfamily. MtnX family.</text>
</comment>
<comment type="similarity">
    <text evidence="2">In the C-terminal section; belongs to the aldolase class II family. MtnB subfamily.</text>
</comment>
<reference key="1">
    <citation type="journal article" date="2004" name="J. Mol. Microbiol. Biotechnol.">
        <title>The complete genome sequence of Bacillus licheniformis DSM13, an organism with great industrial potential.</title>
        <authorList>
            <person name="Veith B."/>
            <person name="Herzberg C."/>
            <person name="Steckel S."/>
            <person name="Feesche J."/>
            <person name="Maurer K.H."/>
            <person name="Ehrenreich P."/>
            <person name="Baeumer S."/>
            <person name="Henne A."/>
            <person name="Liesegang H."/>
            <person name="Merkl R."/>
            <person name="Ehrenreich A."/>
            <person name="Gottschalk G."/>
        </authorList>
    </citation>
    <scope>NUCLEOTIDE SEQUENCE [LARGE SCALE GENOMIC DNA]</scope>
    <source>
        <strain>ATCC 14580 / DSM 13 / JCM 2505 / CCUG 7422 / NBRC 12200 / NCIMB 9375 / NCTC 10341 / NRRL NRS-1264 / Gibson 46</strain>
    </source>
</reference>
<reference key="2">
    <citation type="journal article" date="2004" name="Genome Biol.">
        <title>Complete genome sequence of the industrial bacterium Bacillus licheniformis and comparisons with closely related Bacillus species.</title>
        <authorList>
            <person name="Rey M.W."/>
            <person name="Ramaiya P."/>
            <person name="Nelson B.A."/>
            <person name="Brody-Karpin S.D."/>
            <person name="Zaretsky E.J."/>
            <person name="Tang M."/>
            <person name="Lopez de Leon A."/>
            <person name="Xiang H."/>
            <person name="Gusti V."/>
            <person name="Clausen I.G."/>
            <person name="Olsen P.B."/>
            <person name="Rasmussen M.D."/>
            <person name="Andersen J.T."/>
            <person name="Joergensen P.L."/>
            <person name="Larsen T.S."/>
            <person name="Sorokin A."/>
            <person name="Bolotin A."/>
            <person name="Lapidus A."/>
            <person name="Galleron N."/>
            <person name="Ehrlich S.D."/>
            <person name="Berka R.M."/>
        </authorList>
    </citation>
    <scope>NUCLEOTIDE SEQUENCE [LARGE SCALE GENOMIC DNA]</scope>
    <source>
        <strain>ATCC 14580 / DSM 13 / JCM 2505 / CCUG 7422 / NBRC 12200 / NCIMB 9375 / NCTC 10341 / NRRL NRS-1264 / Gibson 46</strain>
    </source>
</reference>
<sequence length="427" mass="48068">MRKPLIICDFDGTITTNDNIISIMKQFAPEEWTALKDGVLSKDISIRDGVGRMFNLLPASLKEDITAYVLKQAETRPGFKEFVSFLDEKGLPFYVVSGGMDFFVYPLLEGIVGKDRIYCNEAAFTSRNIEIRWPYPCDGGCGNDCGCCKPSIIRRLKGRDDFVVMIGDSVTDVEAAKCSDLCIARDYLLRECEELGLKHAAFGDFRDVRRILEETAEVKEWMSEQKRQELAEVKKELAERDWFPATSGNLSIKVSEDPLRFLITASGKDKRKETEEDFLLADEEGRPAETGHALKPSAETLLHTYVYQHTNAGCCLHVHTVDNNVISELYAKEKQVTFRGQEIIKALGLWEEHAEVTVPIIENSAHIPDLAADFAGHLSGDSGAVLIRSHGITVWGKTAFEAKRMLEAYEFLFSWHLKLKALQAYHV</sequence>
<accession>Q65KJ7</accession>
<accession>Q62VZ5</accession>